<accession>Q332W2</accession>
<accession>Q1KXK7</accession>
<evidence type="ECO:0000255" key="1">
    <source>
        <dbReference type="HAMAP-Rule" id="MF_00643"/>
    </source>
</evidence>
<sequence length="39" mass="4454">MTIDRTYPIFTVRWLTVHGLAVPTVSFLGSISAMQFIQR</sequence>
<protein>
    <recommendedName>
        <fullName evidence="1">Cytochrome b559 subunit beta</fullName>
    </recommendedName>
    <alternativeName>
        <fullName evidence="1">PSII reaction center subunit VI</fullName>
    </alternativeName>
</protein>
<geneLocation type="chloroplast"/>
<gene>
    <name evidence="1" type="primary">psbF</name>
</gene>
<organism>
    <name type="scientific">Lactuca sativa</name>
    <name type="common">Garden lettuce</name>
    <dbReference type="NCBI Taxonomy" id="4236"/>
    <lineage>
        <taxon>Eukaryota</taxon>
        <taxon>Viridiplantae</taxon>
        <taxon>Streptophyta</taxon>
        <taxon>Embryophyta</taxon>
        <taxon>Tracheophyta</taxon>
        <taxon>Spermatophyta</taxon>
        <taxon>Magnoliopsida</taxon>
        <taxon>eudicotyledons</taxon>
        <taxon>Gunneridae</taxon>
        <taxon>Pentapetalae</taxon>
        <taxon>asterids</taxon>
        <taxon>campanulids</taxon>
        <taxon>Asterales</taxon>
        <taxon>Asteraceae</taxon>
        <taxon>Cichorioideae</taxon>
        <taxon>Cichorieae</taxon>
        <taxon>Lactucinae</taxon>
        <taxon>Lactuca</taxon>
    </lineage>
</organism>
<name>PSBF_LACSA</name>
<dbReference type="EMBL" id="AP007232">
    <property type="protein sequence ID" value="BAE47610.1"/>
    <property type="molecule type" value="Genomic_DNA"/>
</dbReference>
<dbReference type="EMBL" id="DQ383816">
    <property type="protein sequence ID" value="ABD47249.1"/>
    <property type="molecule type" value="Genomic_DNA"/>
</dbReference>
<dbReference type="RefSeq" id="YP_398345.1">
    <property type="nucleotide sequence ID" value="NC_007578.1"/>
</dbReference>
<dbReference type="SMR" id="Q332W2"/>
<dbReference type="GeneID" id="3772844"/>
<dbReference type="KEGG" id="lsv:3772844"/>
<dbReference type="OrthoDB" id="77at2759"/>
<dbReference type="GO" id="GO:0009535">
    <property type="term" value="C:chloroplast thylakoid membrane"/>
    <property type="evidence" value="ECO:0007669"/>
    <property type="project" value="UniProtKB-SubCell"/>
</dbReference>
<dbReference type="GO" id="GO:0009539">
    <property type="term" value="C:photosystem II reaction center"/>
    <property type="evidence" value="ECO:0007669"/>
    <property type="project" value="InterPro"/>
</dbReference>
<dbReference type="GO" id="GO:0009055">
    <property type="term" value="F:electron transfer activity"/>
    <property type="evidence" value="ECO:0007669"/>
    <property type="project" value="UniProtKB-UniRule"/>
</dbReference>
<dbReference type="GO" id="GO:0020037">
    <property type="term" value="F:heme binding"/>
    <property type="evidence" value="ECO:0007669"/>
    <property type="project" value="InterPro"/>
</dbReference>
<dbReference type="GO" id="GO:0005506">
    <property type="term" value="F:iron ion binding"/>
    <property type="evidence" value="ECO:0007669"/>
    <property type="project" value="UniProtKB-UniRule"/>
</dbReference>
<dbReference type="GO" id="GO:0009767">
    <property type="term" value="P:photosynthetic electron transport chain"/>
    <property type="evidence" value="ECO:0007669"/>
    <property type="project" value="InterPro"/>
</dbReference>
<dbReference type="HAMAP" id="MF_00643">
    <property type="entry name" value="PSII_PsbF"/>
    <property type="match status" value="1"/>
</dbReference>
<dbReference type="InterPro" id="IPR006241">
    <property type="entry name" value="PSII_cyt_b559_bsu"/>
</dbReference>
<dbReference type="InterPro" id="IPR006216">
    <property type="entry name" value="PSII_cyt_b559_CS"/>
</dbReference>
<dbReference type="InterPro" id="IPR013081">
    <property type="entry name" value="PSII_cyt_b559_N"/>
</dbReference>
<dbReference type="NCBIfam" id="TIGR01333">
    <property type="entry name" value="cyt_b559_beta"/>
    <property type="match status" value="1"/>
</dbReference>
<dbReference type="Pfam" id="PF00283">
    <property type="entry name" value="Cytochrom_B559"/>
    <property type="match status" value="1"/>
</dbReference>
<dbReference type="PIRSF" id="PIRSF000037">
    <property type="entry name" value="PsbF"/>
    <property type="match status" value="1"/>
</dbReference>
<dbReference type="SUPFAM" id="SSF161045">
    <property type="entry name" value="Cytochrome b559 subunits"/>
    <property type="match status" value="1"/>
</dbReference>
<dbReference type="PROSITE" id="PS00537">
    <property type="entry name" value="CYTOCHROME_B559"/>
    <property type="match status" value="1"/>
</dbReference>
<feature type="chain" id="PRO_0000233642" description="Cytochrome b559 subunit beta">
    <location>
        <begin position="1"/>
        <end position="39"/>
    </location>
</feature>
<feature type="transmembrane region" description="Helical" evidence="1">
    <location>
        <begin position="14"/>
        <end position="30"/>
    </location>
</feature>
<feature type="binding site" description="axial binding residue" evidence="1">
    <location>
        <position position="18"/>
    </location>
    <ligand>
        <name>heme</name>
        <dbReference type="ChEBI" id="CHEBI:30413"/>
        <note>ligand shared with alpha subunit</note>
    </ligand>
    <ligandPart>
        <name>Fe</name>
        <dbReference type="ChEBI" id="CHEBI:18248"/>
    </ligandPart>
</feature>
<comment type="function">
    <text evidence="1">This b-type cytochrome is tightly associated with the reaction center of photosystem II (PSII). PSII is a light-driven water:plastoquinone oxidoreductase that uses light energy to abstract electrons from H(2)O, generating O(2) and a proton gradient subsequently used for ATP formation. It consists of a core antenna complex that captures photons, and an electron transfer chain that converts photonic excitation into a charge separation.</text>
</comment>
<comment type="cofactor">
    <cofactor evidence="1">
        <name>heme b</name>
        <dbReference type="ChEBI" id="CHEBI:60344"/>
    </cofactor>
    <text evidence="1">With its partner (PsbE) binds heme. PSII binds additional chlorophylls, carotenoids and specific lipids.</text>
</comment>
<comment type="subunit">
    <text evidence="1">Heterodimer of an alpha subunit and a beta subunit. PSII is composed of 1 copy each of membrane proteins PsbA, PsbB, PsbC, PsbD, PsbE, PsbF, PsbH, PsbI, PsbJ, PsbK, PsbL, PsbM, PsbT, PsbX, PsbY, PsbZ, Psb30/Ycf12, at least 3 peripheral proteins of the oxygen-evolving complex and a large number of cofactors. It forms dimeric complexes.</text>
</comment>
<comment type="subcellular location">
    <subcellularLocation>
        <location evidence="1">Plastid</location>
        <location evidence="1">Chloroplast thylakoid membrane</location>
        <topology evidence="1">Single-pass membrane protein</topology>
    </subcellularLocation>
</comment>
<comment type="similarity">
    <text evidence="1">Belongs to the PsbE/PsbF family.</text>
</comment>
<keyword id="KW-0150">Chloroplast</keyword>
<keyword id="KW-0249">Electron transport</keyword>
<keyword id="KW-0349">Heme</keyword>
<keyword id="KW-0408">Iron</keyword>
<keyword id="KW-0472">Membrane</keyword>
<keyword id="KW-0479">Metal-binding</keyword>
<keyword id="KW-0602">Photosynthesis</keyword>
<keyword id="KW-0604">Photosystem II</keyword>
<keyword id="KW-0934">Plastid</keyword>
<keyword id="KW-0793">Thylakoid</keyword>
<keyword id="KW-0812">Transmembrane</keyword>
<keyword id="KW-1133">Transmembrane helix</keyword>
<keyword id="KW-0813">Transport</keyword>
<proteinExistence type="inferred from homology"/>
<reference key="1">
    <citation type="journal article" date="2006" name="Transgenic Res.">
        <title>Efficient and stable transformation of Lactuca sativa L. cv. Cisco (lettuce) plastids.</title>
        <authorList>
            <person name="Kanamoto H."/>
            <person name="Yamashita A."/>
            <person name="Asao H."/>
            <person name="Okumura S."/>
            <person name="Takase H."/>
            <person name="Hattori M."/>
            <person name="Yokota A."/>
            <person name="Tomizawa K."/>
        </authorList>
    </citation>
    <scope>NUCLEOTIDE SEQUENCE [LARGE SCALE GENOMIC DNA]</scope>
    <source>
        <strain>cv. Cisco</strain>
    </source>
</reference>
<reference key="2">
    <citation type="submission" date="2006-01" db="EMBL/GenBank/DDBJ databases">
        <title>A comparison of the first two published chloroplast genomes in Asteraceae: Lactuca and Helianthus.</title>
        <authorList>
            <person name="Timme R.E."/>
            <person name="Kuehl J.V."/>
            <person name="Boore J.L."/>
            <person name="Jansen R.K."/>
        </authorList>
    </citation>
    <scope>NUCLEOTIDE SEQUENCE [LARGE SCALE GENOMIC DNA]</scope>
    <source>
        <strain>cv. Salinas</strain>
    </source>
</reference>